<comment type="function">
    <text evidence="1">Cell wall formation.</text>
</comment>
<comment type="catalytic activity">
    <reaction evidence="1">
        <text>UDP-N-acetyl-alpha-D-muramate + NADP(+) = UDP-N-acetyl-3-O-(1-carboxyvinyl)-alpha-D-glucosamine + NADPH + H(+)</text>
        <dbReference type="Rhea" id="RHEA:12248"/>
        <dbReference type="ChEBI" id="CHEBI:15378"/>
        <dbReference type="ChEBI" id="CHEBI:57783"/>
        <dbReference type="ChEBI" id="CHEBI:58349"/>
        <dbReference type="ChEBI" id="CHEBI:68483"/>
        <dbReference type="ChEBI" id="CHEBI:70757"/>
        <dbReference type="EC" id="1.3.1.98"/>
    </reaction>
</comment>
<comment type="cofactor">
    <cofactor evidence="1">
        <name>FAD</name>
        <dbReference type="ChEBI" id="CHEBI:57692"/>
    </cofactor>
</comment>
<comment type="pathway">
    <text evidence="1">Cell wall biogenesis; peptidoglycan biosynthesis.</text>
</comment>
<comment type="subcellular location">
    <subcellularLocation>
        <location evidence="1">Cytoplasm</location>
    </subcellularLocation>
</comment>
<comment type="similarity">
    <text evidence="1">Belongs to the MurB family.</text>
</comment>
<proteinExistence type="inferred from homology"/>
<sequence length="300" mass="31999">MNDELYARLRAELRGEILRDEPMARHTSLKVGGAADFFVTPADRDDLTALLALLAETGTPYLVVGGGYNLLVRDGGIRGVVISLARLDEMTLLAGERVMAGAGVTNRQFVQLLRDRGLGGLEFLCGIPGTVGGALAMNAGAHGGAVVDRVEELLTIRDGEMLQTGRDGLDYGYRFLRLAPGEIIVGATFRLDPADPDQIGARIAGYLEHRAASQKVGFPNAGSFFKNPEGTAAWRLIDETGLRGERVGGAQVSEAHANFLINRGGATAADFLALATRINEAVKQRTGITLEEEVRIVGEE</sequence>
<dbReference type="EC" id="1.3.1.98" evidence="1"/>
<dbReference type="EMBL" id="CP000148">
    <property type="protein sequence ID" value="ABB30657.1"/>
    <property type="molecule type" value="Genomic_DNA"/>
</dbReference>
<dbReference type="RefSeq" id="WP_004512386.1">
    <property type="nucleotide sequence ID" value="NC_007517.1"/>
</dbReference>
<dbReference type="SMR" id="Q39YL7"/>
<dbReference type="STRING" id="269799.Gmet_0414"/>
<dbReference type="KEGG" id="gme:Gmet_0414"/>
<dbReference type="eggNOG" id="COG0812">
    <property type="taxonomic scope" value="Bacteria"/>
</dbReference>
<dbReference type="HOGENOM" id="CLU_035304_1_1_7"/>
<dbReference type="UniPathway" id="UPA00219"/>
<dbReference type="Proteomes" id="UP000007073">
    <property type="component" value="Chromosome"/>
</dbReference>
<dbReference type="GO" id="GO:0005829">
    <property type="term" value="C:cytosol"/>
    <property type="evidence" value="ECO:0007669"/>
    <property type="project" value="TreeGrafter"/>
</dbReference>
<dbReference type="GO" id="GO:0071949">
    <property type="term" value="F:FAD binding"/>
    <property type="evidence" value="ECO:0007669"/>
    <property type="project" value="InterPro"/>
</dbReference>
<dbReference type="GO" id="GO:0008762">
    <property type="term" value="F:UDP-N-acetylmuramate dehydrogenase activity"/>
    <property type="evidence" value="ECO:0007669"/>
    <property type="project" value="UniProtKB-UniRule"/>
</dbReference>
<dbReference type="GO" id="GO:0051301">
    <property type="term" value="P:cell division"/>
    <property type="evidence" value="ECO:0007669"/>
    <property type="project" value="UniProtKB-KW"/>
</dbReference>
<dbReference type="GO" id="GO:0071555">
    <property type="term" value="P:cell wall organization"/>
    <property type="evidence" value="ECO:0007669"/>
    <property type="project" value="UniProtKB-KW"/>
</dbReference>
<dbReference type="GO" id="GO:0009252">
    <property type="term" value="P:peptidoglycan biosynthetic process"/>
    <property type="evidence" value="ECO:0007669"/>
    <property type="project" value="UniProtKB-UniRule"/>
</dbReference>
<dbReference type="GO" id="GO:0008360">
    <property type="term" value="P:regulation of cell shape"/>
    <property type="evidence" value="ECO:0007669"/>
    <property type="project" value="UniProtKB-KW"/>
</dbReference>
<dbReference type="Gene3D" id="3.30.465.10">
    <property type="match status" value="1"/>
</dbReference>
<dbReference type="Gene3D" id="3.90.78.10">
    <property type="entry name" value="UDP-N-acetylenolpyruvoylglucosamine reductase, C-terminal domain"/>
    <property type="match status" value="1"/>
</dbReference>
<dbReference type="Gene3D" id="3.30.43.10">
    <property type="entry name" value="Uridine Diphospho-n-acetylenolpyruvylglucosamine Reductase, domain 2"/>
    <property type="match status" value="1"/>
</dbReference>
<dbReference type="HAMAP" id="MF_00037">
    <property type="entry name" value="MurB"/>
    <property type="match status" value="1"/>
</dbReference>
<dbReference type="InterPro" id="IPR016166">
    <property type="entry name" value="FAD-bd_PCMH"/>
</dbReference>
<dbReference type="InterPro" id="IPR036318">
    <property type="entry name" value="FAD-bd_PCMH-like_sf"/>
</dbReference>
<dbReference type="InterPro" id="IPR016167">
    <property type="entry name" value="FAD-bd_PCMH_sub1"/>
</dbReference>
<dbReference type="InterPro" id="IPR016169">
    <property type="entry name" value="FAD-bd_PCMH_sub2"/>
</dbReference>
<dbReference type="InterPro" id="IPR003170">
    <property type="entry name" value="MurB"/>
</dbReference>
<dbReference type="InterPro" id="IPR011601">
    <property type="entry name" value="MurB_C"/>
</dbReference>
<dbReference type="InterPro" id="IPR036635">
    <property type="entry name" value="MurB_C_sf"/>
</dbReference>
<dbReference type="InterPro" id="IPR006094">
    <property type="entry name" value="Oxid_FAD_bind_N"/>
</dbReference>
<dbReference type="NCBIfam" id="TIGR00179">
    <property type="entry name" value="murB"/>
    <property type="match status" value="1"/>
</dbReference>
<dbReference type="NCBIfam" id="NF010480">
    <property type="entry name" value="PRK13905.1"/>
    <property type="match status" value="1"/>
</dbReference>
<dbReference type="PANTHER" id="PTHR21071">
    <property type="entry name" value="UDP-N-ACETYLENOLPYRUVOYLGLUCOSAMINE REDUCTASE"/>
    <property type="match status" value="1"/>
</dbReference>
<dbReference type="PANTHER" id="PTHR21071:SF4">
    <property type="entry name" value="UDP-N-ACETYLENOLPYRUVOYLGLUCOSAMINE REDUCTASE"/>
    <property type="match status" value="1"/>
</dbReference>
<dbReference type="Pfam" id="PF01565">
    <property type="entry name" value="FAD_binding_4"/>
    <property type="match status" value="1"/>
</dbReference>
<dbReference type="Pfam" id="PF02873">
    <property type="entry name" value="MurB_C"/>
    <property type="match status" value="1"/>
</dbReference>
<dbReference type="SUPFAM" id="SSF56176">
    <property type="entry name" value="FAD-binding/transporter-associated domain-like"/>
    <property type="match status" value="1"/>
</dbReference>
<dbReference type="SUPFAM" id="SSF56194">
    <property type="entry name" value="Uridine diphospho-N-Acetylenolpyruvylglucosamine reductase, MurB, C-terminal domain"/>
    <property type="match status" value="1"/>
</dbReference>
<dbReference type="PROSITE" id="PS51387">
    <property type="entry name" value="FAD_PCMH"/>
    <property type="match status" value="1"/>
</dbReference>
<feature type="chain" id="PRO_0000332461" description="UDP-N-acetylenolpyruvoylglucosamine reductase">
    <location>
        <begin position="1"/>
        <end position="300"/>
    </location>
</feature>
<feature type="domain" description="FAD-binding PCMH-type" evidence="1">
    <location>
        <begin position="30"/>
        <end position="194"/>
    </location>
</feature>
<feature type="active site" evidence="1">
    <location>
        <position position="174"/>
    </location>
</feature>
<feature type="active site" description="Proton donor" evidence="1">
    <location>
        <position position="223"/>
    </location>
</feature>
<feature type="active site" evidence="1">
    <location>
        <position position="293"/>
    </location>
</feature>
<name>MURB_GEOMG</name>
<organism>
    <name type="scientific">Geobacter metallireducens (strain ATCC 53774 / DSM 7210 / GS-15)</name>
    <dbReference type="NCBI Taxonomy" id="269799"/>
    <lineage>
        <taxon>Bacteria</taxon>
        <taxon>Pseudomonadati</taxon>
        <taxon>Thermodesulfobacteriota</taxon>
        <taxon>Desulfuromonadia</taxon>
        <taxon>Geobacterales</taxon>
        <taxon>Geobacteraceae</taxon>
        <taxon>Geobacter</taxon>
    </lineage>
</organism>
<protein>
    <recommendedName>
        <fullName evidence="1">UDP-N-acetylenolpyruvoylglucosamine reductase</fullName>
        <ecNumber evidence="1">1.3.1.98</ecNumber>
    </recommendedName>
    <alternativeName>
        <fullName evidence="1">UDP-N-acetylmuramate dehydrogenase</fullName>
    </alternativeName>
</protein>
<gene>
    <name evidence="1" type="primary">murB</name>
    <name type="ordered locus">Gmet_0414</name>
</gene>
<accession>Q39YL7</accession>
<reference key="1">
    <citation type="journal article" date="2009" name="BMC Microbiol.">
        <title>The genome sequence of Geobacter metallireducens: features of metabolism, physiology and regulation common and dissimilar to Geobacter sulfurreducens.</title>
        <authorList>
            <person name="Aklujkar M."/>
            <person name="Krushkal J."/>
            <person name="DiBartolo G."/>
            <person name="Lapidus A."/>
            <person name="Land M.L."/>
            <person name="Lovley D.R."/>
        </authorList>
    </citation>
    <scope>NUCLEOTIDE SEQUENCE [LARGE SCALE GENOMIC DNA]</scope>
    <source>
        <strain>ATCC 53774 / DSM 7210 / GS-15</strain>
    </source>
</reference>
<evidence type="ECO:0000255" key="1">
    <source>
        <dbReference type="HAMAP-Rule" id="MF_00037"/>
    </source>
</evidence>
<keyword id="KW-0131">Cell cycle</keyword>
<keyword id="KW-0132">Cell division</keyword>
<keyword id="KW-0133">Cell shape</keyword>
<keyword id="KW-0961">Cell wall biogenesis/degradation</keyword>
<keyword id="KW-0963">Cytoplasm</keyword>
<keyword id="KW-0274">FAD</keyword>
<keyword id="KW-0285">Flavoprotein</keyword>
<keyword id="KW-0521">NADP</keyword>
<keyword id="KW-0560">Oxidoreductase</keyword>
<keyword id="KW-0573">Peptidoglycan synthesis</keyword>
<keyword id="KW-1185">Reference proteome</keyword>